<evidence type="ECO:0000255" key="1"/>
<evidence type="ECO:0000303" key="2">
    <source>
    </source>
</evidence>
<evidence type="ECO:0000305" key="3"/>
<evidence type="ECO:0000305" key="4">
    <source>
    </source>
</evidence>
<comment type="subcellular location">
    <subcellularLocation>
        <location evidence="4">Secreted</location>
    </subcellularLocation>
</comment>
<comment type="tissue specificity">
    <text evidence="4">Expressed by the venom duct.</text>
</comment>
<comment type="domain">
    <text>The cysteine framework is XXII (C-C-C-C-C-C-C-C).</text>
</comment>
<comment type="PTM">
    <text evidence="3">Contains 4 disulfide bonds.</text>
</comment>
<comment type="similarity">
    <text>Belongs to the teretoxin C (TC) superfamily.</text>
</comment>
<feature type="signal peptide" evidence="1">
    <location>
        <begin position="1"/>
        <end position="21"/>
    </location>
</feature>
<feature type="propeptide" id="PRO_0000435094" evidence="3">
    <location>
        <begin position="22"/>
        <end position="24"/>
    </location>
</feature>
<feature type="chain" id="PRO_0000435095" description="Teretoxin Tan22.13">
    <location>
        <begin position="25"/>
        <end position="91"/>
    </location>
</feature>
<accession>P0DN64</accession>
<sequence length="91" mass="10325">MKVQILFALMMVLVTLCLGQKMQRGVIEDVCNNCETNCQLIKDYYGRSFCQDSLCQDSYRFCTNLEFTMDKCKDENSNTHAGCVTALLSTS</sequence>
<organism>
    <name type="scientific">Terebra anilis</name>
    <name type="common">Auger snail</name>
    <name type="synonym">Cinguloterebra anilis</name>
    <dbReference type="NCBI Taxonomy" id="553697"/>
    <lineage>
        <taxon>Eukaryota</taxon>
        <taxon>Metazoa</taxon>
        <taxon>Spiralia</taxon>
        <taxon>Lophotrochozoa</taxon>
        <taxon>Mollusca</taxon>
        <taxon>Gastropoda</taxon>
        <taxon>Caenogastropoda</taxon>
        <taxon>Neogastropoda</taxon>
        <taxon>Conoidea</taxon>
        <taxon>Terebridae</taxon>
        <taxon>Terebra</taxon>
    </lineage>
</organism>
<keyword id="KW-1015">Disulfide bond</keyword>
<keyword id="KW-0964">Secreted</keyword>
<keyword id="KW-0732">Signal</keyword>
<keyword id="KW-0800">Toxin</keyword>
<dbReference type="GO" id="GO:0005576">
    <property type="term" value="C:extracellular region"/>
    <property type="evidence" value="ECO:0007669"/>
    <property type="project" value="UniProtKB-SubCell"/>
</dbReference>
<dbReference type="GO" id="GO:0090729">
    <property type="term" value="F:toxin activity"/>
    <property type="evidence" value="ECO:0007669"/>
    <property type="project" value="UniProtKB-KW"/>
</dbReference>
<name>TMD_TERAN</name>
<reference key="1">
    <citation type="journal article" date="2015" name="Genome Biol. Evol.">
        <title>Molecular diversity and gene evolution of the venom arsenal of Terebridae predatory marine snails.</title>
        <authorList>
            <person name="Gorson J."/>
            <person name="Ramrattan G."/>
            <person name="Verdes A."/>
            <person name="Wright E.M."/>
            <person name="Kantor Y."/>
            <person name="Rajaram Srinivasan R."/>
            <person name="Musunuri R."/>
            <person name="Packer D."/>
            <person name="Albano G."/>
            <person name="Qiu W.G."/>
            <person name="Holford M."/>
        </authorList>
    </citation>
    <scope>NUCLEOTIDE SEQUENCE [MRNA]</scope>
    <source>
        <tissue>Venom duct</tissue>
    </source>
</reference>
<proteinExistence type="inferred from homology"/>
<protein>
    <recommendedName>
        <fullName evidence="2">Teretoxin Tan22.13</fullName>
    </recommendedName>
</protein>